<gene>
    <name type="primary">SRPRB</name>
    <name type="ORF">PSEC0230</name>
</gene>
<name>SRPRB_HUMAN</name>
<proteinExistence type="evidence at protein level"/>
<dbReference type="EMBL" id="AF141882">
    <property type="protein sequence ID" value="AAD34888.3"/>
    <property type="molecule type" value="mRNA"/>
</dbReference>
<dbReference type="EMBL" id="AK027525">
    <property type="protein sequence ID" value="BAB55176.1"/>
    <property type="molecule type" value="mRNA"/>
</dbReference>
<dbReference type="EMBL" id="AK075531">
    <property type="protein sequence ID" value="BAC11675.1"/>
    <property type="molecule type" value="mRNA"/>
</dbReference>
<dbReference type="EMBL" id="BC063001">
    <property type="protein sequence ID" value="AAH63001.1"/>
    <property type="molecule type" value="mRNA"/>
</dbReference>
<dbReference type="EMBL" id="BC065299">
    <property type="protein sequence ID" value="AAH65299.1"/>
    <property type="molecule type" value="mRNA"/>
</dbReference>
<dbReference type="CCDS" id="CCDS3081.1"/>
<dbReference type="RefSeq" id="NP_001366242.1">
    <property type="nucleotide sequence ID" value="NM_001379313.1"/>
</dbReference>
<dbReference type="RefSeq" id="NP_067026.3">
    <property type="nucleotide sequence ID" value="NM_021203.3"/>
</dbReference>
<dbReference type="PDB" id="7NFX">
    <property type="method" value="EM"/>
    <property type="resolution" value="3.20 A"/>
    <property type="chains" value="v=1-271"/>
</dbReference>
<dbReference type="PDBsum" id="7NFX"/>
<dbReference type="EMDB" id="EMD-12303"/>
<dbReference type="SMR" id="Q9Y5M8"/>
<dbReference type="BioGRID" id="121810">
    <property type="interactions" value="367"/>
</dbReference>
<dbReference type="ComplexPortal" id="CPX-630">
    <property type="entry name" value="Signal recognition particle receptor complex"/>
</dbReference>
<dbReference type="DIP" id="DIP-50218N"/>
<dbReference type="ELM" id="Q9Y5M8"/>
<dbReference type="FunCoup" id="Q9Y5M8">
    <property type="interactions" value="1507"/>
</dbReference>
<dbReference type="IntAct" id="Q9Y5M8">
    <property type="interactions" value="191"/>
</dbReference>
<dbReference type="MINT" id="Q9Y5M8"/>
<dbReference type="STRING" id="9606.ENSP00000418401"/>
<dbReference type="ChEMBL" id="CHEMBL4295993"/>
<dbReference type="GlyCosmos" id="Q9Y5M8">
    <property type="glycosylation" value="1 site, 1 glycan"/>
</dbReference>
<dbReference type="GlyGen" id="Q9Y5M8">
    <property type="glycosylation" value="5 sites, 2 O-linked glycans (5 sites)"/>
</dbReference>
<dbReference type="iPTMnet" id="Q9Y5M8"/>
<dbReference type="PhosphoSitePlus" id="Q9Y5M8"/>
<dbReference type="SwissPalm" id="Q9Y5M8"/>
<dbReference type="BioMuta" id="SRPRB"/>
<dbReference type="DMDM" id="31340540"/>
<dbReference type="jPOST" id="Q9Y5M8"/>
<dbReference type="MassIVE" id="Q9Y5M8"/>
<dbReference type="PaxDb" id="9606-ENSP00000418401"/>
<dbReference type="PeptideAtlas" id="Q9Y5M8"/>
<dbReference type="ProteomicsDB" id="86446"/>
<dbReference type="Pumba" id="Q9Y5M8"/>
<dbReference type="TopDownProteomics" id="Q9Y5M8"/>
<dbReference type="Antibodypedia" id="2504">
    <property type="antibodies" value="363 antibodies from 24 providers"/>
</dbReference>
<dbReference type="DNASU" id="58477"/>
<dbReference type="Ensembl" id="ENST00000466490.7">
    <property type="protein sequence ID" value="ENSP00000418401.1"/>
    <property type="gene ID" value="ENSG00000144867.13"/>
</dbReference>
<dbReference type="Ensembl" id="ENST00000678299.1">
    <property type="protein sequence ID" value="ENSP00000503923.1"/>
    <property type="gene ID" value="ENSG00000144867.13"/>
</dbReference>
<dbReference type="GeneID" id="58477"/>
<dbReference type="KEGG" id="hsa:58477"/>
<dbReference type="MANE-Select" id="ENST00000678299.1">
    <property type="protein sequence ID" value="ENSP00000503923.1"/>
    <property type="RefSeq nucleotide sequence ID" value="NM_001379313.1"/>
    <property type="RefSeq protein sequence ID" value="NP_001366242.1"/>
</dbReference>
<dbReference type="UCSC" id="uc003epx.2">
    <property type="organism name" value="human"/>
</dbReference>
<dbReference type="AGR" id="HGNC:24085"/>
<dbReference type="CTD" id="58477"/>
<dbReference type="DisGeNET" id="58477"/>
<dbReference type="GeneCards" id="SRPRB"/>
<dbReference type="HGNC" id="HGNC:24085">
    <property type="gene designation" value="SRPRB"/>
</dbReference>
<dbReference type="HPA" id="ENSG00000144867">
    <property type="expression patterns" value="Low tissue specificity"/>
</dbReference>
<dbReference type="MIM" id="616883">
    <property type="type" value="gene"/>
</dbReference>
<dbReference type="neXtProt" id="NX_Q9Y5M8"/>
<dbReference type="OpenTargets" id="ENSG00000144867"/>
<dbReference type="PharmGKB" id="PA128394701"/>
<dbReference type="VEuPathDB" id="HostDB:ENSG00000144867"/>
<dbReference type="eggNOG" id="KOG0090">
    <property type="taxonomic scope" value="Eukaryota"/>
</dbReference>
<dbReference type="GeneTree" id="ENSGT00940000154388"/>
<dbReference type="HOGENOM" id="CLU_046625_2_0_1"/>
<dbReference type="InParanoid" id="Q9Y5M8"/>
<dbReference type="OMA" id="MNGVKVT"/>
<dbReference type="OrthoDB" id="41266at2759"/>
<dbReference type="PAN-GO" id="Q9Y5M8">
    <property type="GO annotations" value="2 GO annotations based on evolutionary models"/>
</dbReference>
<dbReference type="PhylomeDB" id="Q9Y5M8"/>
<dbReference type="TreeFam" id="TF106190"/>
<dbReference type="BRENDA" id="3.6.5.4">
    <property type="organism ID" value="2681"/>
</dbReference>
<dbReference type="PathwayCommons" id="Q9Y5M8"/>
<dbReference type="Reactome" id="R-HSA-1799339">
    <property type="pathway name" value="SRP-dependent cotranslational protein targeting to membrane"/>
</dbReference>
<dbReference type="Reactome" id="R-HSA-381038">
    <property type="pathway name" value="XBP1(S) activates chaperone genes"/>
</dbReference>
<dbReference type="SignaLink" id="Q9Y5M8"/>
<dbReference type="SIGNOR" id="Q9Y5M8"/>
<dbReference type="BioGRID-ORCS" id="58477">
    <property type="hits" value="470 hits in 1162 CRISPR screens"/>
</dbReference>
<dbReference type="CD-CODE" id="FB4E32DD">
    <property type="entry name" value="Presynaptic clusters and postsynaptic densities"/>
</dbReference>
<dbReference type="ChiTaRS" id="SRPRB">
    <property type="organism name" value="human"/>
</dbReference>
<dbReference type="GeneWiki" id="SRPRB"/>
<dbReference type="GenomeRNAi" id="58477"/>
<dbReference type="Pharos" id="Q9Y5M8">
    <property type="development level" value="Tbio"/>
</dbReference>
<dbReference type="PRO" id="PR:Q9Y5M8"/>
<dbReference type="Proteomes" id="UP000005640">
    <property type="component" value="Chromosome 3"/>
</dbReference>
<dbReference type="RNAct" id="Q9Y5M8">
    <property type="molecule type" value="protein"/>
</dbReference>
<dbReference type="Bgee" id="ENSG00000144867">
    <property type="expression patterns" value="Expressed in body of pancreas and 202 other cell types or tissues"/>
</dbReference>
<dbReference type="ExpressionAtlas" id="Q9Y5M8">
    <property type="expression patterns" value="baseline and differential"/>
</dbReference>
<dbReference type="GO" id="GO:0005737">
    <property type="term" value="C:cytoplasm"/>
    <property type="evidence" value="ECO:0000314"/>
    <property type="project" value="UniProtKB"/>
</dbReference>
<dbReference type="GO" id="GO:0005881">
    <property type="term" value="C:cytoplasmic microtubule"/>
    <property type="evidence" value="ECO:0000314"/>
    <property type="project" value="UniProtKB"/>
</dbReference>
<dbReference type="GO" id="GO:0005789">
    <property type="term" value="C:endoplasmic reticulum membrane"/>
    <property type="evidence" value="ECO:0000304"/>
    <property type="project" value="Reactome"/>
</dbReference>
<dbReference type="GO" id="GO:0016020">
    <property type="term" value="C:membrane"/>
    <property type="evidence" value="ECO:0000314"/>
    <property type="project" value="MGI"/>
</dbReference>
<dbReference type="GO" id="GO:0005785">
    <property type="term" value="C:signal recognition particle receptor complex"/>
    <property type="evidence" value="ECO:0000269"/>
    <property type="project" value="ComplexPortal"/>
</dbReference>
<dbReference type="GO" id="GO:0005525">
    <property type="term" value="F:GTP binding"/>
    <property type="evidence" value="ECO:0007669"/>
    <property type="project" value="UniProtKB-KW"/>
</dbReference>
<dbReference type="GO" id="GO:0045047">
    <property type="term" value="P:protein targeting to ER"/>
    <property type="evidence" value="ECO:0000318"/>
    <property type="project" value="GO_Central"/>
</dbReference>
<dbReference type="GO" id="GO:0006617">
    <property type="term" value="P:SRP-dependent cotranslational protein targeting to membrane, signal sequence recognition"/>
    <property type="evidence" value="ECO:0000303"/>
    <property type="project" value="ComplexPortal"/>
</dbReference>
<dbReference type="CDD" id="cd04105">
    <property type="entry name" value="SR_beta"/>
    <property type="match status" value="1"/>
</dbReference>
<dbReference type="FunFam" id="3.40.50.300:FF:001173">
    <property type="entry name" value="signal recognition particle receptor subunit beta"/>
    <property type="match status" value="1"/>
</dbReference>
<dbReference type="Gene3D" id="3.40.50.300">
    <property type="entry name" value="P-loop containing nucleotide triphosphate hydrolases"/>
    <property type="match status" value="1"/>
</dbReference>
<dbReference type="InterPro" id="IPR027417">
    <property type="entry name" value="P-loop_NTPase"/>
</dbReference>
<dbReference type="InterPro" id="IPR024156">
    <property type="entry name" value="Small_GTPase_ARF"/>
</dbReference>
<dbReference type="InterPro" id="IPR019009">
    <property type="entry name" value="SRP_receptor_beta_su"/>
</dbReference>
<dbReference type="PANTHER" id="PTHR45909">
    <property type="entry name" value="ADP-RIBOSYLATION FACTOR-RELATED PROTEIN 1"/>
    <property type="match status" value="1"/>
</dbReference>
<dbReference type="PANTHER" id="PTHR45909:SF1">
    <property type="entry name" value="ADP-RIBOSYLATION FACTOR-RELATED PROTEIN 1"/>
    <property type="match status" value="1"/>
</dbReference>
<dbReference type="Pfam" id="PF09439">
    <property type="entry name" value="SRPRB"/>
    <property type="match status" value="1"/>
</dbReference>
<dbReference type="SUPFAM" id="SSF52540">
    <property type="entry name" value="P-loop containing nucleoside triphosphate hydrolases"/>
    <property type="match status" value="1"/>
</dbReference>
<feature type="chain" id="PRO_0000101227" description="Signal recognition particle receptor subunit beta">
    <location>
        <begin position="1"/>
        <end position="271"/>
    </location>
</feature>
<feature type="transmembrane region" description="Helical" evidence="4">
    <location>
        <begin position="37"/>
        <end position="57"/>
    </location>
</feature>
<feature type="binding site" evidence="1">
    <location>
        <begin position="71"/>
        <end position="79"/>
    </location>
    <ligand>
        <name>GTP</name>
        <dbReference type="ChEBI" id="CHEBI:37565"/>
    </ligand>
</feature>
<feature type="binding site" evidence="1">
    <location>
        <begin position="92"/>
        <end position="95"/>
    </location>
    <ligand>
        <name>GTP</name>
        <dbReference type="ChEBI" id="CHEBI:37565"/>
    </ligand>
</feature>
<feature type="binding site" evidence="1">
    <location>
        <position position="120"/>
    </location>
    <ligand>
        <name>GTP</name>
        <dbReference type="ChEBI" id="CHEBI:37565"/>
    </ligand>
</feature>
<feature type="binding site" evidence="1">
    <location>
        <position position="248"/>
    </location>
    <ligand>
        <name>GTP</name>
        <dbReference type="ChEBI" id="CHEBI:37565"/>
    </ligand>
</feature>
<feature type="modified residue" description="Phosphoserine" evidence="9">
    <location>
        <position position="112"/>
    </location>
</feature>
<feature type="modified residue" description="Phosphothreonine" evidence="9">
    <location>
        <position position="214"/>
    </location>
</feature>
<feature type="sequence variant" id="VAR_057335" description="In dbSNP:rs1107413." evidence="5 6">
    <original>V</original>
    <variation>L</variation>
    <location>
        <position position="9"/>
    </location>
</feature>
<feature type="sequence conflict" description="In Ref. 2; BAB55176." evidence="7" ref="2">
    <original>R</original>
    <variation>G</variation>
    <location>
        <position position="137"/>
    </location>
</feature>
<feature type="sequence conflict" description="In Ref. 2; BAB55176." evidence="7" ref="2">
    <original>D</original>
    <variation>Y</variation>
    <location>
        <position position="216"/>
    </location>
</feature>
<organism>
    <name type="scientific">Homo sapiens</name>
    <name type="common">Human</name>
    <dbReference type="NCBI Taxonomy" id="9606"/>
    <lineage>
        <taxon>Eukaryota</taxon>
        <taxon>Metazoa</taxon>
        <taxon>Chordata</taxon>
        <taxon>Craniata</taxon>
        <taxon>Vertebrata</taxon>
        <taxon>Euteleostomi</taxon>
        <taxon>Mammalia</taxon>
        <taxon>Eutheria</taxon>
        <taxon>Euarchontoglires</taxon>
        <taxon>Primates</taxon>
        <taxon>Haplorrhini</taxon>
        <taxon>Catarrhini</taxon>
        <taxon>Hominidae</taxon>
        <taxon>Homo</taxon>
    </lineage>
</organism>
<reference key="1">
    <citation type="submission" date="2002-11" db="EMBL/GenBank/DDBJ databases">
        <authorList>
            <person name="Yan W."/>
            <person name="Zhu F."/>
            <person name="Chai Y."/>
            <person name="Zhao Z."/>
            <person name="Li Q."/>
            <person name="Wang C."/>
        </authorList>
    </citation>
    <scope>NUCLEOTIDE SEQUENCE [MRNA]</scope>
    <source>
        <tissue>Mammary carcinoma</tissue>
    </source>
</reference>
<reference key="2">
    <citation type="journal article" date="2004" name="Nat. Genet.">
        <title>Complete sequencing and characterization of 21,243 full-length human cDNAs.</title>
        <authorList>
            <person name="Ota T."/>
            <person name="Suzuki Y."/>
            <person name="Nishikawa T."/>
            <person name="Otsuki T."/>
            <person name="Sugiyama T."/>
            <person name="Irie R."/>
            <person name="Wakamatsu A."/>
            <person name="Hayashi K."/>
            <person name="Sato H."/>
            <person name="Nagai K."/>
            <person name="Kimura K."/>
            <person name="Makita H."/>
            <person name="Sekine M."/>
            <person name="Obayashi M."/>
            <person name="Nishi T."/>
            <person name="Shibahara T."/>
            <person name="Tanaka T."/>
            <person name="Ishii S."/>
            <person name="Yamamoto J."/>
            <person name="Saito K."/>
            <person name="Kawai Y."/>
            <person name="Isono Y."/>
            <person name="Nakamura Y."/>
            <person name="Nagahari K."/>
            <person name="Murakami K."/>
            <person name="Yasuda T."/>
            <person name="Iwayanagi T."/>
            <person name="Wagatsuma M."/>
            <person name="Shiratori A."/>
            <person name="Sudo H."/>
            <person name="Hosoiri T."/>
            <person name="Kaku Y."/>
            <person name="Kodaira H."/>
            <person name="Kondo H."/>
            <person name="Sugawara M."/>
            <person name="Takahashi M."/>
            <person name="Kanda K."/>
            <person name="Yokoi T."/>
            <person name="Furuya T."/>
            <person name="Kikkawa E."/>
            <person name="Omura Y."/>
            <person name="Abe K."/>
            <person name="Kamihara K."/>
            <person name="Katsuta N."/>
            <person name="Sato K."/>
            <person name="Tanikawa M."/>
            <person name="Yamazaki M."/>
            <person name="Ninomiya K."/>
            <person name="Ishibashi T."/>
            <person name="Yamashita H."/>
            <person name="Murakawa K."/>
            <person name="Fujimori K."/>
            <person name="Tanai H."/>
            <person name="Kimata M."/>
            <person name="Watanabe M."/>
            <person name="Hiraoka S."/>
            <person name="Chiba Y."/>
            <person name="Ishida S."/>
            <person name="Ono Y."/>
            <person name="Takiguchi S."/>
            <person name="Watanabe S."/>
            <person name="Yosida M."/>
            <person name="Hotuta T."/>
            <person name="Kusano J."/>
            <person name="Kanehori K."/>
            <person name="Takahashi-Fujii A."/>
            <person name="Hara H."/>
            <person name="Tanase T.-O."/>
            <person name="Nomura Y."/>
            <person name="Togiya S."/>
            <person name="Komai F."/>
            <person name="Hara R."/>
            <person name="Takeuchi K."/>
            <person name="Arita M."/>
            <person name="Imose N."/>
            <person name="Musashino K."/>
            <person name="Yuuki H."/>
            <person name="Oshima A."/>
            <person name="Sasaki N."/>
            <person name="Aotsuka S."/>
            <person name="Yoshikawa Y."/>
            <person name="Matsunawa H."/>
            <person name="Ichihara T."/>
            <person name="Shiohata N."/>
            <person name="Sano S."/>
            <person name="Moriya S."/>
            <person name="Momiyama H."/>
            <person name="Satoh N."/>
            <person name="Takami S."/>
            <person name="Terashima Y."/>
            <person name="Suzuki O."/>
            <person name="Nakagawa S."/>
            <person name="Senoh A."/>
            <person name="Mizoguchi H."/>
            <person name="Goto Y."/>
            <person name="Shimizu F."/>
            <person name="Wakebe H."/>
            <person name="Hishigaki H."/>
            <person name="Watanabe T."/>
            <person name="Sugiyama A."/>
            <person name="Takemoto M."/>
            <person name="Kawakami B."/>
            <person name="Yamazaki M."/>
            <person name="Watanabe K."/>
            <person name="Kumagai A."/>
            <person name="Itakura S."/>
            <person name="Fukuzumi Y."/>
            <person name="Fujimori Y."/>
            <person name="Komiyama M."/>
            <person name="Tashiro H."/>
            <person name="Tanigami A."/>
            <person name="Fujiwara T."/>
            <person name="Ono T."/>
            <person name="Yamada K."/>
            <person name="Fujii Y."/>
            <person name="Ozaki K."/>
            <person name="Hirao M."/>
            <person name="Ohmori Y."/>
            <person name="Kawabata A."/>
            <person name="Hikiji T."/>
            <person name="Kobatake N."/>
            <person name="Inagaki H."/>
            <person name="Ikema Y."/>
            <person name="Okamoto S."/>
            <person name="Okitani R."/>
            <person name="Kawakami T."/>
            <person name="Noguchi S."/>
            <person name="Itoh T."/>
            <person name="Shigeta K."/>
            <person name="Senba T."/>
            <person name="Matsumura K."/>
            <person name="Nakajima Y."/>
            <person name="Mizuno T."/>
            <person name="Morinaga M."/>
            <person name="Sasaki M."/>
            <person name="Togashi T."/>
            <person name="Oyama M."/>
            <person name="Hata H."/>
            <person name="Watanabe M."/>
            <person name="Komatsu T."/>
            <person name="Mizushima-Sugano J."/>
            <person name="Satoh T."/>
            <person name="Shirai Y."/>
            <person name="Takahashi Y."/>
            <person name="Nakagawa K."/>
            <person name="Okumura K."/>
            <person name="Nagase T."/>
            <person name="Nomura N."/>
            <person name="Kikuchi H."/>
            <person name="Masuho Y."/>
            <person name="Yamashita R."/>
            <person name="Nakai K."/>
            <person name="Yada T."/>
            <person name="Nakamura Y."/>
            <person name="Ohara O."/>
            <person name="Isogai T."/>
            <person name="Sugano S."/>
        </authorList>
    </citation>
    <scope>NUCLEOTIDE SEQUENCE [LARGE SCALE MRNA]</scope>
    <scope>VARIANT LEU-9</scope>
</reference>
<reference key="3">
    <citation type="journal article" date="2005" name="DNA Res.">
        <title>Signal sequence and keyword trap in silico for selection of full-length human cDNAs encoding secretion or membrane proteins from oligo-capped cDNA libraries.</title>
        <authorList>
            <person name="Otsuki T."/>
            <person name="Ota T."/>
            <person name="Nishikawa T."/>
            <person name="Hayashi K."/>
            <person name="Suzuki Y."/>
            <person name="Yamamoto J."/>
            <person name="Wakamatsu A."/>
            <person name="Kimura K."/>
            <person name="Sakamoto K."/>
            <person name="Hatano N."/>
            <person name="Kawai Y."/>
            <person name="Ishii S."/>
            <person name="Saito K."/>
            <person name="Kojima S."/>
            <person name="Sugiyama T."/>
            <person name="Ono T."/>
            <person name="Okano K."/>
            <person name="Yoshikawa Y."/>
            <person name="Aotsuka S."/>
            <person name="Sasaki N."/>
            <person name="Hattori A."/>
            <person name="Okumura K."/>
            <person name="Nagai K."/>
            <person name="Sugano S."/>
            <person name="Isogai T."/>
        </authorList>
    </citation>
    <scope>NUCLEOTIDE SEQUENCE [LARGE SCALE MRNA]</scope>
    <source>
        <tissue>Embryo</tissue>
    </source>
</reference>
<reference key="4">
    <citation type="journal article" date="2004" name="Genome Res.">
        <title>The status, quality, and expansion of the NIH full-length cDNA project: the Mammalian Gene Collection (MGC).</title>
        <authorList>
            <consortium name="The MGC Project Team"/>
        </authorList>
    </citation>
    <scope>NUCLEOTIDE SEQUENCE [LARGE SCALE MRNA]</scope>
    <scope>VARIANT LEU-9</scope>
    <source>
        <tissue>Colon</tissue>
        <tissue>Eye</tissue>
    </source>
</reference>
<reference key="5">
    <citation type="journal article" date="2011" name="BMC Syst. Biol.">
        <title>Initial characterization of the human central proteome.</title>
        <authorList>
            <person name="Burkard T.R."/>
            <person name="Planyavsky M."/>
            <person name="Kaupe I."/>
            <person name="Breitwieser F.P."/>
            <person name="Buerckstuemmer T."/>
            <person name="Bennett K.L."/>
            <person name="Superti-Furga G."/>
            <person name="Colinge J."/>
        </authorList>
    </citation>
    <scope>IDENTIFICATION BY MASS SPECTROMETRY [LARGE SCALE ANALYSIS]</scope>
</reference>
<reference key="6">
    <citation type="journal article" date="2013" name="J. Proteome Res.">
        <title>Toward a comprehensive characterization of a human cancer cell phosphoproteome.</title>
        <authorList>
            <person name="Zhou H."/>
            <person name="Di Palma S."/>
            <person name="Preisinger C."/>
            <person name="Peng M."/>
            <person name="Polat A.N."/>
            <person name="Heck A.J."/>
            <person name="Mohammed S."/>
        </authorList>
    </citation>
    <scope>PHOSPHORYLATION [LARGE SCALE ANALYSIS] AT SER-112 AND THR-214</scope>
    <scope>IDENTIFICATION BY MASS SPECTROMETRY [LARGE SCALE ANALYSIS]</scope>
    <source>
        <tissue>Cervix carcinoma</tissue>
        <tissue>Erythroleukemia</tissue>
    </source>
</reference>
<reference key="7">
    <citation type="journal article" date="2014" name="J. Proteomics">
        <title>An enzyme assisted RP-RPLC approach for in-depth analysis of human liver phosphoproteome.</title>
        <authorList>
            <person name="Bian Y."/>
            <person name="Song C."/>
            <person name="Cheng K."/>
            <person name="Dong M."/>
            <person name="Wang F."/>
            <person name="Huang J."/>
            <person name="Sun D."/>
            <person name="Wang L."/>
            <person name="Ye M."/>
            <person name="Zou H."/>
        </authorList>
    </citation>
    <scope>IDENTIFICATION BY MASS SPECTROMETRY [LARGE SCALE ANALYSIS]</scope>
    <source>
        <tissue>Liver</tissue>
    </source>
</reference>
<reference key="8">
    <citation type="journal article" date="2015" name="Proteomics">
        <title>N-terminome analysis of the human mitochondrial proteome.</title>
        <authorList>
            <person name="Vaca Jacome A.S."/>
            <person name="Rabilloud T."/>
            <person name="Schaeffer-Reiss C."/>
            <person name="Rompais M."/>
            <person name="Ayoub D."/>
            <person name="Lane L."/>
            <person name="Bairoch A."/>
            <person name="Van Dorsselaer A."/>
            <person name="Carapito C."/>
        </authorList>
    </citation>
    <scope>IDENTIFICATION BY MASS SPECTROMETRY [LARGE SCALE ANALYSIS]</scope>
</reference>
<reference evidence="8" key="9">
    <citation type="journal article" date="2021" name="Sci. Adv.">
        <title>Receptor compaction and GTPase rearrangement drive SRP-mediated cotranslational protein translocation into the ER.</title>
        <authorList>
            <person name="Lee J.H."/>
            <person name="Jomaa A."/>
            <person name="Jomaa A."/>
            <person name="Chung S."/>
            <person name="Hwang Fu Y.H."/>
            <person name="Qian R."/>
            <person name="Sun X."/>
            <person name="Hsieh H.H."/>
            <person name="Chandrasekar S."/>
            <person name="Bi X."/>
            <person name="Mattei S."/>
            <person name="Boehringer D."/>
            <person name="Weiss S."/>
            <person name="Ban N."/>
            <person name="Shan S.O."/>
        </authorList>
    </citation>
    <scope>STRUCTURE BY ELECTRON MICROSCOPY (3.20 ANGSTROMS) OF SIGNAL RECOGNITION PARTICLE IN COMPLEX WITH RIBOSOME NASCENT CHAIN COMPLEX AND THE SRP RECEPTOR</scope>
</reference>
<comment type="function">
    <text evidence="3">Component of the signal recognition particle (SRP) complex receptor (SR) (By similarity). Ensures, in conjunction with the SRP complex, the correct targeting of the nascent secretory proteins to the endoplasmic reticulum membrane system (By similarity). May mediate the membrane association of SR (By similarity).</text>
</comment>
<comment type="subunit">
    <text evidence="3">Heterodimer with SRPRA.</text>
</comment>
<comment type="subcellular location">
    <subcellularLocation>
        <location evidence="2">Endoplasmic reticulum membrane</location>
        <topology evidence="4">Single-pass membrane protein</topology>
    </subcellularLocation>
</comment>
<comment type="similarity">
    <text evidence="7">Belongs to the SRP receptor beta subunit family.</text>
</comment>
<accession>Q9Y5M8</accession>
<accession>Q6P595</accession>
<accession>Q8N2D8</accession>
<keyword id="KW-0002">3D-structure</keyword>
<keyword id="KW-0256">Endoplasmic reticulum</keyword>
<keyword id="KW-0342">GTP-binding</keyword>
<keyword id="KW-0472">Membrane</keyword>
<keyword id="KW-0547">Nucleotide-binding</keyword>
<keyword id="KW-0597">Phosphoprotein</keyword>
<keyword id="KW-1267">Proteomics identification</keyword>
<keyword id="KW-0675">Receptor</keyword>
<keyword id="KW-1185">Reference proteome</keyword>
<keyword id="KW-0812">Transmembrane</keyword>
<keyword id="KW-1133">Transmembrane helix</keyword>
<protein>
    <recommendedName>
        <fullName>Signal recognition particle receptor subunit beta</fullName>
        <shortName>SR-beta</shortName>
    </recommendedName>
    <alternativeName>
        <fullName>Protein APMCF1</fullName>
    </alternativeName>
</protein>
<evidence type="ECO:0000250" key="1"/>
<evidence type="ECO:0000250" key="2">
    <source>
        <dbReference type="UniProtKB" id="O13950"/>
    </source>
</evidence>
<evidence type="ECO:0000250" key="3">
    <source>
        <dbReference type="UniProtKB" id="P47758"/>
    </source>
</evidence>
<evidence type="ECO:0000255" key="4"/>
<evidence type="ECO:0000269" key="5">
    <source>
    </source>
</evidence>
<evidence type="ECO:0000269" key="6">
    <source>
    </source>
</evidence>
<evidence type="ECO:0000305" key="7"/>
<evidence type="ECO:0007744" key="8">
    <source>
        <dbReference type="PDB" id="7NFX"/>
    </source>
</evidence>
<evidence type="ECO:0007744" key="9">
    <source>
    </source>
</evidence>
<sequence>MASADSRRVADGGGAGGTFQPYLDTLRQELQQTDPTLLSVVVAVLAVLLTLVFWKLIRSRRSSQRAVLLVGLCDSGKTLLFVRLLTGLYRDTQTSITDSCAVYRVNNNRGNSLTLIDLPGHESLRLQFLERFKSSARAIVFVVDSAAFQREVKDVAEFLYQVLIDSMGLKNTPSFLIACNKQDIAMAKSAKLIQQQLEKELNTLRVTRSAAPSTLDSSSTAPAQLGKKGKEFEFSQLPLKVEFLECSAKGGRGDVGSADIQDLEKWLAKIA</sequence>